<sequence length="232" mass="25808">MSLTDTIRNTFVPIHREGYPFIAGFFVVSLILGWLWDPLFWIGMVLTVWCIYFYRDPERVTPMDDDLVISPADGKVSFVGLAVPPAELDLGYEPMTRVSVFMNVFSVHINRSPVRGKIDKVVHRPGKFLNAELDKASTENERNSVLIESPHGKIGVVQIAGLVARRIVCWSNQDDELSVGERFGLIRFGSRVDVYLPSDATVRVAVGQTAIAGETVLADYGTERGEPVVRIA</sequence>
<feature type="chain" id="PRO_0000262187" description="Phosphatidylserine decarboxylase beta chain" evidence="1">
    <location>
        <begin position="1"/>
        <end position="189"/>
    </location>
</feature>
<feature type="chain" id="PRO_0000262188" description="Phosphatidylserine decarboxylase alpha chain" evidence="1">
    <location>
        <begin position="190"/>
        <end position="232"/>
    </location>
</feature>
<feature type="active site" description="Schiff-base intermediate with substrate; via pyruvic acid" evidence="1">
    <location>
        <position position="190"/>
    </location>
</feature>
<feature type="site" description="Cleavage (non-hydrolytic); by autocatalysis" evidence="1">
    <location>
        <begin position="189"/>
        <end position="190"/>
    </location>
</feature>
<feature type="modified residue" description="Pyruvic acid (Ser); by autocatalysis" evidence="1">
    <location>
        <position position="190"/>
    </location>
</feature>
<accession>Q57ES4</accession>
<proteinExistence type="inferred from homology"/>
<name>PSD_BRUAB</name>
<reference key="1">
    <citation type="journal article" date="2005" name="J. Bacteriol.">
        <title>Completion of the genome sequence of Brucella abortus and comparison to the highly similar genomes of Brucella melitensis and Brucella suis.</title>
        <authorList>
            <person name="Halling S.M."/>
            <person name="Peterson-Burch B.D."/>
            <person name="Bricker B.J."/>
            <person name="Zuerner R.L."/>
            <person name="Qing Z."/>
            <person name="Li L.-L."/>
            <person name="Kapur V."/>
            <person name="Alt D.P."/>
            <person name="Olsen S.C."/>
        </authorList>
    </citation>
    <scope>NUCLEOTIDE SEQUENCE [LARGE SCALE GENOMIC DNA]</scope>
    <source>
        <strain>9-941</strain>
    </source>
</reference>
<evidence type="ECO:0000255" key="1">
    <source>
        <dbReference type="HAMAP-Rule" id="MF_00664"/>
    </source>
</evidence>
<gene>
    <name evidence="1" type="primary">psd</name>
    <name type="ordered locus">BruAb1_0465</name>
</gene>
<organism>
    <name type="scientific">Brucella abortus biovar 1 (strain 9-941)</name>
    <dbReference type="NCBI Taxonomy" id="262698"/>
    <lineage>
        <taxon>Bacteria</taxon>
        <taxon>Pseudomonadati</taxon>
        <taxon>Pseudomonadota</taxon>
        <taxon>Alphaproteobacteria</taxon>
        <taxon>Hyphomicrobiales</taxon>
        <taxon>Brucellaceae</taxon>
        <taxon>Brucella/Ochrobactrum group</taxon>
        <taxon>Brucella</taxon>
    </lineage>
</organism>
<dbReference type="EC" id="4.1.1.65" evidence="1"/>
<dbReference type="EMBL" id="AE017223">
    <property type="protein sequence ID" value="AAX73860.1"/>
    <property type="molecule type" value="Genomic_DNA"/>
</dbReference>
<dbReference type="EnsemblBacteria" id="AAX73860">
    <property type="protein sequence ID" value="AAX73860"/>
    <property type="gene ID" value="BruAb1_0465"/>
</dbReference>
<dbReference type="KEGG" id="bmb:BruAb1_0465"/>
<dbReference type="HOGENOM" id="CLU_072492_0_0_5"/>
<dbReference type="UniPathway" id="UPA00558">
    <property type="reaction ID" value="UER00616"/>
</dbReference>
<dbReference type="Proteomes" id="UP000000540">
    <property type="component" value="Chromosome I"/>
</dbReference>
<dbReference type="GO" id="GO:0005886">
    <property type="term" value="C:plasma membrane"/>
    <property type="evidence" value="ECO:0007669"/>
    <property type="project" value="UniProtKB-SubCell"/>
</dbReference>
<dbReference type="GO" id="GO:0004609">
    <property type="term" value="F:phosphatidylserine decarboxylase activity"/>
    <property type="evidence" value="ECO:0007669"/>
    <property type="project" value="UniProtKB-UniRule"/>
</dbReference>
<dbReference type="GO" id="GO:0006646">
    <property type="term" value="P:phosphatidylethanolamine biosynthetic process"/>
    <property type="evidence" value="ECO:0007669"/>
    <property type="project" value="UniProtKB-UniRule"/>
</dbReference>
<dbReference type="HAMAP" id="MF_00664">
    <property type="entry name" value="PS_decarb_PSD_A"/>
    <property type="match status" value="1"/>
</dbReference>
<dbReference type="InterPro" id="IPR003817">
    <property type="entry name" value="PS_Dcarbxylase"/>
</dbReference>
<dbReference type="InterPro" id="IPR033175">
    <property type="entry name" value="PSD-A"/>
</dbReference>
<dbReference type="NCBIfam" id="NF003677">
    <property type="entry name" value="PRK05305.1-1"/>
    <property type="match status" value="1"/>
</dbReference>
<dbReference type="NCBIfam" id="NF003678">
    <property type="entry name" value="PRK05305.1-2"/>
    <property type="match status" value="1"/>
</dbReference>
<dbReference type="NCBIfam" id="NF003679">
    <property type="entry name" value="PRK05305.1-3"/>
    <property type="match status" value="1"/>
</dbReference>
<dbReference type="NCBIfam" id="NF003685">
    <property type="entry name" value="PRK05305.2-5"/>
    <property type="match status" value="1"/>
</dbReference>
<dbReference type="PANTHER" id="PTHR35809">
    <property type="entry name" value="ARCHAETIDYLSERINE DECARBOXYLASE PROENZYME-RELATED"/>
    <property type="match status" value="1"/>
</dbReference>
<dbReference type="PANTHER" id="PTHR35809:SF1">
    <property type="entry name" value="ARCHAETIDYLSERINE DECARBOXYLASE PROENZYME-RELATED"/>
    <property type="match status" value="1"/>
</dbReference>
<dbReference type="Pfam" id="PF02666">
    <property type="entry name" value="PS_Dcarbxylase"/>
    <property type="match status" value="1"/>
</dbReference>
<keyword id="KW-1003">Cell membrane</keyword>
<keyword id="KW-0210">Decarboxylase</keyword>
<keyword id="KW-0444">Lipid biosynthesis</keyword>
<keyword id="KW-0443">Lipid metabolism</keyword>
<keyword id="KW-0456">Lyase</keyword>
<keyword id="KW-0472">Membrane</keyword>
<keyword id="KW-0594">Phospholipid biosynthesis</keyword>
<keyword id="KW-1208">Phospholipid metabolism</keyword>
<keyword id="KW-0670">Pyruvate</keyword>
<keyword id="KW-0865">Zymogen</keyword>
<protein>
    <recommendedName>
        <fullName evidence="1">Phosphatidylserine decarboxylase proenzyme</fullName>
        <ecNumber evidence="1">4.1.1.65</ecNumber>
    </recommendedName>
    <component>
        <recommendedName>
            <fullName evidence="1">Phosphatidylserine decarboxylase alpha chain</fullName>
        </recommendedName>
    </component>
    <component>
        <recommendedName>
            <fullName evidence="1">Phosphatidylserine decarboxylase beta chain</fullName>
        </recommendedName>
    </component>
</protein>
<comment type="function">
    <text evidence="1">Catalyzes the formation of phosphatidylethanolamine (PtdEtn) from phosphatidylserine (PtdSer).</text>
</comment>
<comment type="catalytic activity">
    <reaction evidence="1">
        <text>a 1,2-diacyl-sn-glycero-3-phospho-L-serine + H(+) = a 1,2-diacyl-sn-glycero-3-phosphoethanolamine + CO2</text>
        <dbReference type="Rhea" id="RHEA:20828"/>
        <dbReference type="ChEBI" id="CHEBI:15378"/>
        <dbReference type="ChEBI" id="CHEBI:16526"/>
        <dbReference type="ChEBI" id="CHEBI:57262"/>
        <dbReference type="ChEBI" id="CHEBI:64612"/>
        <dbReference type="EC" id="4.1.1.65"/>
    </reaction>
</comment>
<comment type="cofactor">
    <cofactor evidence="1">
        <name>pyruvate</name>
        <dbReference type="ChEBI" id="CHEBI:15361"/>
    </cofactor>
    <text evidence="1">Binds 1 pyruvoyl group covalently per subunit.</text>
</comment>
<comment type="pathway">
    <text evidence="1">Phospholipid metabolism; phosphatidylethanolamine biosynthesis; phosphatidylethanolamine from CDP-diacylglycerol: step 2/2.</text>
</comment>
<comment type="subunit">
    <text evidence="1">Heterodimer of a large membrane-associated beta subunit and a small pyruvoyl-containing alpha subunit.</text>
</comment>
<comment type="subcellular location">
    <subcellularLocation>
        <location evidence="1">Cell membrane</location>
        <topology evidence="1">Peripheral membrane protein</topology>
    </subcellularLocation>
</comment>
<comment type="PTM">
    <text evidence="1">Is synthesized initially as an inactive proenzyme. Formation of the active enzyme involves a self-maturation process in which the active site pyruvoyl group is generated from an internal serine residue via an autocatalytic post-translational modification. Two non-identical subunits are generated from the proenzyme in this reaction, and the pyruvate is formed at the N-terminus of the alpha chain, which is derived from the carboxyl end of the proenzyme. The post-translation cleavage follows an unusual pathway, termed non-hydrolytic serinolysis, in which the side chain hydroxyl group of the serine supplies its oxygen atom to form the C-terminus of the beta chain, while the remainder of the serine residue undergoes an oxidative deamination to produce ammonia and the pyruvoyl prosthetic group on the alpha chain.</text>
</comment>
<comment type="similarity">
    <text evidence="1">Belongs to the phosphatidylserine decarboxylase family. PSD-A subfamily.</text>
</comment>